<keyword id="KW-0067">ATP-binding</keyword>
<keyword id="KW-0963">Cytoplasm</keyword>
<keyword id="KW-0275">Fatty acid biosynthesis</keyword>
<keyword id="KW-0276">Fatty acid metabolism</keyword>
<keyword id="KW-0444">Lipid biosynthesis</keyword>
<keyword id="KW-0443">Lipid metabolism</keyword>
<keyword id="KW-0479">Metal-binding</keyword>
<keyword id="KW-0547">Nucleotide-binding</keyword>
<keyword id="KW-1185">Reference proteome</keyword>
<keyword id="KW-0808">Transferase</keyword>
<keyword id="KW-0862">Zinc</keyword>
<keyword id="KW-0863">Zinc-finger</keyword>
<sequence length="294" mass="32735">MSLFDWFADRRKGQFVGKVTQESEESDGLWEKCPECGQVVYRKDLIDNCSVCSNCGHHNRIDSKERIRLISDPNTFKSINNHLTPVDPLGFKDRRAYADRLRESQAGTGLKDGVLTGTCEVNSIPMALAVMDFRFMGGSMGSVVGEKITRLIEHSTKEKLPLLIVCASGGARMQEGMLSLMQMAKISGALERHRDAQLLYMPLLTHPTTGGVTASFAMLGDLILAEPKALIGFAGRRVIEQTLREKLPDNFQTAEYLQDHGFVDTIVPRTELKETLAKILRLHKTQVVKLQTNA</sequence>
<proteinExistence type="inferred from homology"/>
<dbReference type="EC" id="2.1.3.15" evidence="1"/>
<dbReference type="EMBL" id="CP000095">
    <property type="protein sequence ID" value="AAZ57683.1"/>
    <property type="molecule type" value="Genomic_DNA"/>
</dbReference>
<dbReference type="RefSeq" id="WP_011293725.1">
    <property type="nucleotide sequence ID" value="NC_007335.2"/>
</dbReference>
<dbReference type="SMR" id="Q46LE5"/>
<dbReference type="STRING" id="59920.PMN2A_0191"/>
<dbReference type="KEGG" id="pmn:PMN2A_0191"/>
<dbReference type="HOGENOM" id="CLU_015486_1_1_3"/>
<dbReference type="OrthoDB" id="9772975at2"/>
<dbReference type="PhylomeDB" id="Q46LE5"/>
<dbReference type="UniPathway" id="UPA00655">
    <property type="reaction ID" value="UER00711"/>
</dbReference>
<dbReference type="Proteomes" id="UP000002535">
    <property type="component" value="Chromosome"/>
</dbReference>
<dbReference type="GO" id="GO:0009317">
    <property type="term" value="C:acetyl-CoA carboxylase complex"/>
    <property type="evidence" value="ECO:0007669"/>
    <property type="project" value="InterPro"/>
</dbReference>
<dbReference type="GO" id="GO:0003989">
    <property type="term" value="F:acetyl-CoA carboxylase activity"/>
    <property type="evidence" value="ECO:0007669"/>
    <property type="project" value="InterPro"/>
</dbReference>
<dbReference type="GO" id="GO:0005524">
    <property type="term" value="F:ATP binding"/>
    <property type="evidence" value="ECO:0007669"/>
    <property type="project" value="UniProtKB-KW"/>
</dbReference>
<dbReference type="GO" id="GO:0016743">
    <property type="term" value="F:carboxyl- or carbamoyltransferase activity"/>
    <property type="evidence" value="ECO:0007669"/>
    <property type="project" value="UniProtKB-UniRule"/>
</dbReference>
<dbReference type="GO" id="GO:0008270">
    <property type="term" value="F:zinc ion binding"/>
    <property type="evidence" value="ECO:0007669"/>
    <property type="project" value="UniProtKB-UniRule"/>
</dbReference>
<dbReference type="GO" id="GO:0006633">
    <property type="term" value="P:fatty acid biosynthetic process"/>
    <property type="evidence" value="ECO:0007669"/>
    <property type="project" value="UniProtKB-KW"/>
</dbReference>
<dbReference type="GO" id="GO:2001295">
    <property type="term" value="P:malonyl-CoA biosynthetic process"/>
    <property type="evidence" value="ECO:0007669"/>
    <property type="project" value="UniProtKB-UniRule"/>
</dbReference>
<dbReference type="Gene3D" id="3.90.226.10">
    <property type="entry name" value="2-enoyl-CoA Hydratase, Chain A, domain 1"/>
    <property type="match status" value="1"/>
</dbReference>
<dbReference type="HAMAP" id="MF_01395">
    <property type="entry name" value="AcetylCoA_CT_beta"/>
    <property type="match status" value="1"/>
</dbReference>
<dbReference type="InterPro" id="IPR034733">
    <property type="entry name" value="AcCoA_carboxyl_beta"/>
</dbReference>
<dbReference type="InterPro" id="IPR000438">
    <property type="entry name" value="Acetyl_CoA_COase_Trfase_b_su"/>
</dbReference>
<dbReference type="InterPro" id="IPR029045">
    <property type="entry name" value="ClpP/crotonase-like_dom_sf"/>
</dbReference>
<dbReference type="InterPro" id="IPR011762">
    <property type="entry name" value="COA_CT_N"/>
</dbReference>
<dbReference type="InterPro" id="IPR041010">
    <property type="entry name" value="Znf-ACC"/>
</dbReference>
<dbReference type="NCBIfam" id="TIGR00515">
    <property type="entry name" value="accD"/>
    <property type="match status" value="1"/>
</dbReference>
<dbReference type="PANTHER" id="PTHR42995">
    <property type="entry name" value="ACETYL-COENZYME A CARBOXYLASE CARBOXYL TRANSFERASE SUBUNIT BETA, CHLOROPLASTIC"/>
    <property type="match status" value="1"/>
</dbReference>
<dbReference type="PANTHER" id="PTHR42995:SF5">
    <property type="entry name" value="ACETYL-COENZYME A CARBOXYLASE CARBOXYL TRANSFERASE SUBUNIT BETA, CHLOROPLASTIC"/>
    <property type="match status" value="1"/>
</dbReference>
<dbReference type="Pfam" id="PF01039">
    <property type="entry name" value="Carboxyl_trans"/>
    <property type="match status" value="1"/>
</dbReference>
<dbReference type="Pfam" id="PF17848">
    <property type="entry name" value="Zn_ribbon_ACC"/>
    <property type="match status" value="1"/>
</dbReference>
<dbReference type="PRINTS" id="PR01070">
    <property type="entry name" value="ACCCTRFRASEB"/>
</dbReference>
<dbReference type="SUPFAM" id="SSF52096">
    <property type="entry name" value="ClpP/crotonase"/>
    <property type="match status" value="1"/>
</dbReference>
<dbReference type="PROSITE" id="PS50980">
    <property type="entry name" value="COA_CT_NTER"/>
    <property type="match status" value="1"/>
</dbReference>
<feature type="chain" id="PRO_0000359027" description="Acetyl-coenzyme A carboxylase carboxyl transferase subunit beta">
    <location>
        <begin position="1"/>
        <end position="294"/>
    </location>
</feature>
<feature type="domain" description="CoA carboxyltransferase N-terminal" evidence="2">
    <location>
        <begin position="29"/>
        <end position="294"/>
    </location>
</feature>
<feature type="zinc finger region" description="C4-type" evidence="1">
    <location>
        <begin position="33"/>
        <end position="55"/>
    </location>
</feature>
<feature type="binding site" evidence="1">
    <location>
        <position position="33"/>
    </location>
    <ligand>
        <name>Zn(2+)</name>
        <dbReference type="ChEBI" id="CHEBI:29105"/>
    </ligand>
</feature>
<feature type="binding site" evidence="1">
    <location>
        <position position="36"/>
    </location>
    <ligand>
        <name>Zn(2+)</name>
        <dbReference type="ChEBI" id="CHEBI:29105"/>
    </ligand>
</feature>
<feature type="binding site" evidence="1">
    <location>
        <position position="52"/>
    </location>
    <ligand>
        <name>Zn(2+)</name>
        <dbReference type="ChEBI" id="CHEBI:29105"/>
    </ligand>
</feature>
<feature type="binding site" evidence="1">
    <location>
        <position position="55"/>
    </location>
    <ligand>
        <name>Zn(2+)</name>
        <dbReference type="ChEBI" id="CHEBI:29105"/>
    </ligand>
</feature>
<name>ACCD_PROMT</name>
<reference key="1">
    <citation type="journal article" date="2007" name="PLoS Genet.">
        <title>Patterns and implications of gene gain and loss in the evolution of Prochlorococcus.</title>
        <authorList>
            <person name="Kettler G.C."/>
            <person name="Martiny A.C."/>
            <person name="Huang K."/>
            <person name="Zucker J."/>
            <person name="Coleman M.L."/>
            <person name="Rodrigue S."/>
            <person name="Chen F."/>
            <person name="Lapidus A."/>
            <person name="Ferriera S."/>
            <person name="Johnson J."/>
            <person name="Steglich C."/>
            <person name="Church G.M."/>
            <person name="Richardson P."/>
            <person name="Chisholm S.W."/>
        </authorList>
    </citation>
    <scope>NUCLEOTIDE SEQUENCE [LARGE SCALE GENOMIC DNA]</scope>
    <source>
        <strain>NATL2A</strain>
    </source>
</reference>
<gene>
    <name evidence="1" type="primary">accD</name>
    <name type="ordered locus">PMN2A_0191</name>
</gene>
<evidence type="ECO:0000255" key="1">
    <source>
        <dbReference type="HAMAP-Rule" id="MF_01395"/>
    </source>
</evidence>
<evidence type="ECO:0000255" key="2">
    <source>
        <dbReference type="PROSITE-ProRule" id="PRU01136"/>
    </source>
</evidence>
<accession>Q46LE5</accession>
<organism>
    <name type="scientific">Prochlorococcus marinus (strain NATL2A)</name>
    <dbReference type="NCBI Taxonomy" id="59920"/>
    <lineage>
        <taxon>Bacteria</taxon>
        <taxon>Bacillati</taxon>
        <taxon>Cyanobacteriota</taxon>
        <taxon>Cyanophyceae</taxon>
        <taxon>Synechococcales</taxon>
        <taxon>Prochlorococcaceae</taxon>
        <taxon>Prochlorococcus</taxon>
    </lineage>
</organism>
<protein>
    <recommendedName>
        <fullName evidence="1">Acetyl-coenzyme A carboxylase carboxyl transferase subunit beta</fullName>
        <shortName evidence="1">ACCase subunit beta</shortName>
        <shortName evidence="1">Acetyl-CoA carboxylase carboxyltransferase subunit beta</shortName>
        <ecNumber evidence="1">2.1.3.15</ecNumber>
    </recommendedName>
</protein>
<comment type="function">
    <text evidence="1">Component of the acetyl coenzyme A carboxylase (ACC) complex. Biotin carboxylase (BC) catalyzes the carboxylation of biotin on its carrier protein (BCCP) and then the CO(2) group is transferred by the transcarboxylase to acetyl-CoA to form malonyl-CoA.</text>
</comment>
<comment type="catalytic activity">
    <reaction evidence="1">
        <text>N(6)-carboxybiotinyl-L-lysyl-[protein] + acetyl-CoA = N(6)-biotinyl-L-lysyl-[protein] + malonyl-CoA</text>
        <dbReference type="Rhea" id="RHEA:54728"/>
        <dbReference type="Rhea" id="RHEA-COMP:10505"/>
        <dbReference type="Rhea" id="RHEA-COMP:10506"/>
        <dbReference type="ChEBI" id="CHEBI:57288"/>
        <dbReference type="ChEBI" id="CHEBI:57384"/>
        <dbReference type="ChEBI" id="CHEBI:83144"/>
        <dbReference type="ChEBI" id="CHEBI:83145"/>
        <dbReference type="EC" id="2.1.3.15"/>
    </reaction>
</comment>
<comment type="cofactor">
    <cofactor evidence="1">
        <name>Zn(2+)</name>
        <dbReference type="ChEBI" id="CHEBI:29105"/>
    </cofactor>
    <text evidence="1">Binds 1 zinc ion per subunit.</text>
</comment>
<comment type="pathway">
    <text evidence="1">Lipid metabolism; malonyl-CoA biosynthesis; malonyl-CoA from acetyl-CoA: step 1/1.</text>
</comment>
<comment type="subunit">
    <text evidence="1">Acetyl-CoA carboxylase is a heterohexamer composed of biotin carboxyl carrier protein (AccB), biotin carboxylase (AccC) and two subunits each of ACCase subunit alpha (AccA) and ACCase subunit beta (AccD).</text>
</comment>
<comment type="subcellular location">
    <subcellularLocation>
        <location evidence="1">Cytoplasm</location>
    </subcellularLocation>
</comment>
<comment type="similarity">
    <text evidence="1">Belongs to the AccD/PCCB family.</text>
</comment>